<proteinExistence type="inferred from homology"/>
<gene>
    <name evidence="1" type="primary">ruvB</name>
    <name type="ordered locus">SeSA_A2048</name>
</gene>
<feature type="chain" id="PRO_1000089676" description="Holliday junction branch migration complex subunit RuvB">
    <location>
        <begin position="1"/>
        <end position="336"/>
    </location>
</feature>
<feature type="region of interest" description="Large ATPase domain (RuvB-L)" evidence="1">
    <location>
        <begin position="4"/>
        <end position="184"/>
    </location>
</feature>
<feature type="region of interest" description="Small ATPAse domain (RuvB-S)" evidence="1">
    <location>
        <begin position="185"/>
        <end position="255"/>
    </location>
</feature>
<feature type="region of interest" description="Head domain (RuvB-H)" evidence="1">
    <location>
        <begin position="258"/>
        <end position="336"/>
    </location>
</feature>
<feature type="binding site" evidence="1">
    <location>
        <position position="23"/>
    </location>
    <ligand>
        <name>ATP</name>
        <dbReference type="ChEBI" id="CHEBI:30616"/>
    </ligand>
</feature>
<feature type="binding site" evidence="1">
    <location>
        <position position="24"/>
    </location>
    <ligand>
        <name>ATP</name>
        <dbReference type="ChEBI" id="CHEBI:30616"/>
    </ligand>
</feature>
<feature type="binding site" evidence="1">
    <location>
        <position position="65"/>
    </location>
    <ligand>
        <name>ATP</name>
        <dbReference type="ChEBI" id="CHEBI:30616"/>
    </ligand>
</feature>
<feature type="binding site" evidence="1">
    <location>
        <position position="68"/>
    </location>
    <ligand>
        <name>ATP</name>
        <dbReference type="ChEBI" id="CHEBI:30616"/>
    </ligand>
</feature>
<feature type="binding site" evidence="1">
    <location>
        <position position="69"/>
    </location>
    <ligand>
        <name>ATP</name>
        <dbReference type="ChEBI" id="CHEBI:30616"/>
    </ligand>
</feature>
<feature type="binding site" evidence="1">
    <location>
        <position position="69"/>
    </location>
    <ligand>
        <name>Mg(2+)</name>
        <dbReference type="ChEBI" id="CHEBI:18420"/>
    </ligand>
</feature>
<feature type="binding site" evidence="1">
    <location>
        <position position="70"/>
    </location>
    <ligand>
        <name>ATP</name>
        <dbReference type="ChEBI" id="CHEBI:30616"/>
    </ligand>
</feature>
<feature type="binding site" evidence="1">
    <location>
        <begin position="131"/>
        <end position="133"/>
    </location>
    <ligand>
        <name>ATP</name>
        <dbReference type="ChEBI" id="CHEBI:30616"/>
    </ligand>
</feature>
<feature type="binding site" evidence="1">
    <location>
        <position position="174"/>
    </location>
    <ligand>
        <name>ATP</name>
        <dbReference type="ChEBI" id="CHEBI:30616"/>
    </ligand>
</feature>
<feature type="binding site" evidence="1">
    <location>
        <position position="184"/>
    </location>
    <ligand>
        <name>ATP</name>
        <dbReference type="ChEBI" id="CHEBI:30616"/>
    </ligand>
</feature>
<feature type="binding site" evidence="1">
    <location>
        <position position="221"/>
    </location>
    <ligand>
        <name>ATP</name>
        <dbReference type="ChEBI" id="CHEBI:30616"/>
    </ligand>
</feature>
<feature type="binding site" evidence="1">
    <location>
        <position position="294"/>
    </location>
    <ligand>
        <name>DNA</name>
        <dbReference type="ChEBI" id="CHEBI:16991"/>
    </ligand>
</feature>
<feature type="binding site" evidence="1">
    <location>
        <position position="313"/>
    </location>
    <ligand>
        <name>DNA</name>
        <dbReference type="ChEBI" id="CHEBI:16991"/>
    </ligand>
</feature>
<feature type="binding site" evidence="1">
    <location>
        <position position="318"/>
    </location>
    <ligand>
        <name>DNA</name>
        <dbReference type="ChEBI" id="CHEBI:16991"/>
    </ligand>
</feature>
<organism>
    <name type="scientific">Salmonella schwarzengrund (strain CVM19633)</name>
    <dbReference type="NCBI Taxonomy" id="439843"/>
    <lineage>
        <taxon>Bacteria</taxon>
        <taxon>Pseudomonadati</taxon>
        <taxon>Pseudomonadota</taxon>
        <taxon>Gammaproteobacteria</taxon>
        <taxon>Enterobacterales</taxon>
        <taxon>Enterobacteriaceae</taxon>
        <taxon>Salmonella</taxon>
    </lineage>
</organism>
<name>RUVB_SALSV</name>
<accession>B4TYR7</accession>
<reference key="1">
    <citation type="journal article" date="2011" name="J. Bacteriol.">
        <title>Comparative genomics of 28 Salmonella enterica isolates: evidence for CRISPR-mediated adaptive sublineage evolution.</title>
        <authorList>
            <person name="Fricke W.F."/>
            <person name="Mammel M.K."/>
            <person name="McDermott P.F."/>
            <person name="Tartera C."/>
            <person name="White D.G."/>
            <person name="Leclerc J.E."/>
            <person name="Ravel J."/>
            <person name="Cebula T.A."/>
        </authorList>
    </citation>
    <scope>NUCLEOTIDE SEQUENCE [LARGE SCALE GENOMIC DNA]</scope>
    <source>
        <strain>CVM19633</strain>
    </source>
</reference>
<comment type="function">
    <text evidence="1">The RuvA-RuvB-RuvC complex processes Holliday junction (HJ) DNA during genetic recombination and DNA repair, while the RuvA-RuvB complex plays an important role in the rescue of blocked DNA replication forks via replication fork reversal (RFR). RuvA specifically binds to HJ cruciform DNA, conferring on it an open structure. The RuvB hexamer acts as an ATP-dependent pump, pulling dsDNA into and through the RuvAB complex. RuvB forms 2 homohexamers on either side of HJ DNA bound by 1 or 2 RuvA tetramers; 4 subunits per hexamer contact DNA at a time. Coordinated motions by a converter formed by DNA-disengaged RuvB subunits stimulates ATP hydrolysis and nucleotide exchange. Immobilization of the converter enables RuvB to convert the ATP-contained energy into a lever motion, pulling 2 nucleotides of DNA out of the RuvA tetramer per ATP hydrolyzed, thus driving DNA branch migration. The RuvB motors rotate together with the DNA substrate, which together with the progressing nucleotide cycle form the mechanistic basis for DNA recombination by continuous HJ branch migration. Branch migration allows RuvC to scan DNA until it finds its consensus sequence, where it cleaves and resolves cruciform DNA.</text>
</comment>
<comment type="catalytic activity">
    <reaction evidence="1">
        <text>ATP + H2O = ADP + phosphate + H(+)</text>
        <dbReference type="Rhea" id="RHEA:13065"/>
        <dbReference type="ChEBI" id="CHEBI:15377"/>
        <dbReference type="ChEBI" id="CHEBI:15378"/>
        <dbReference type="ChEBI" id="CHEBI:30616"/>
        <dbReference type="ChEBI" id="CHEBI:43474"/>
        <dbReference type="ChEBI" id="CHEBI:456216"/>
    </reaction>
</comment>
<comment type="subunit">
    <text evidence="1">Homohexamer. Forms an RuvA(8)-RuvB(12)-Holliday junction (HJ) complex. HJ DNA is sandwiched between 2 RuvA tetramers; dsDNA enters through RuvA and exits via RuvB. An RuvB hexamer assembles on each DNA strand where it exits the tetramer. Each RuvB hexamer is contacted by two RuvA subunits (via domain III) on 2 adjacent RuvB subunits; this complex drives branch migration. In the full resolvosome a probable DNA-RuvA(4)-RuvB(12)-RuvC(2) complex forms which resolves the HJ.</text>
</comment>
<comment type="subcellular location">
    <subcellularLocation>
        <location evidence="1">Cytoplasm</location>
    </subcellularLocation>
</comment>
<comment type="domain">
    <text evidence="1">Has 3 domains, the large (RuvB-L) and small ATPase (RuvB-S) domains and the C-terminal head (RuvB-H) domain. The head domain binds DNA, while the ATPase domains jointly bind ATP, ADP or are empty depending on the state of the subunit in the translocation cycle. During a single DNA translocation step the structure of each domain remains the same, but their relative positions change.</text>
</comment>
<comment type="similarity">
    <text evidence="1">Belongs to the RuvB family.</text>
</comment>
<keyword id="KW-0067">ATP-binding</keyword>
<keyword id="KW-0963">Cytoplasm</keyword>
<keyword id="KW-0227">DNA damage</keyword>
<keyword id="KW-0233">DNA recombination</keyword>
<keyword id="KW-0234">DNA repair</keyword>
<keyword id="KW-0238">DNA-binding</keyword>
<keyword id="KW-0378">Hydrolase</keyword>
<keyword id="KW-0547">Nucleotide-binding</keyword>
<sequence>MIEADRLISAGATIAEDVADRAIRPKLLAEYVGQPQVRSQMEIFIQAAKRRGDALDHLLIFGPPGLGKTTLANIVANEMGVNLRTTSGPVLEKAGDLAAMLTNLEPHDVLFIDEIHRLSPVVEEVLYPAMEDYQLDIMIGEGPAARSIKIDLPPFTLIGATTRAGSLTSPLRDRFGIVQRLEFYQVPDLQHIVGRSARHMGLEMSDDGALEVARRARGTPRIANRLLRRVRDFAEVKHDGAISAEIAAQALDMLNVDAEGFDYMDRKLLLAVIDKFFGGPVGLDNLAAAIGEERETIEDVLEPYLIQQGFLQRTPRGRMATVRAWNHFGITPPEMP</sequence>
<protein>
    <recommendedName>
        <fullName evidence="1">Holliday junction branch migration complex subunit RuvB</fullName>
        <ecNumber evidence="1">3.6.4.-</ecNumber>
    </recommendedName>
</protein>
<evidence type="ECO:0000255" key="1">
    <source>
        <dbReference type="HAMAP-Rule" id="MF_00016"/>
    </source>
</evidence>
<dbReference type="EC" id="3.6.4.-" evidence="1"/>
<dbReference type="EMBL" id="CP001127">
    <property type="protein sequence ID" value="ACF90208.1"/>
    <property type="molecule type" value="Genomic_DNA"/>
</dbReference>
<dbReference type="RefSeq" id="WP_000568508.1">
    <property type="nucleotide sequence ID" value="NC_011094.1"/>
</dbReference>
<dbReference type="SMR" id="B4TYR7"/>
<dbReference type="KEGG" id="sew:SeSA_A2048"/>
<dbReference type="HOGENOM" id="CLU_055599_1_0_6"/>
<dbReference type="Proteomes" id="UP000001865">
    <property type="component" value="Chromosome"/>
</dbReference>
<dbReference type="GO" id="GO:0005737">
    <property type="term" value="C:cytoplasm"/>
    <property type="evidence" value="ECO:0007669"/>
    <property type="project" value="UniProtKB-SubCell"/>
</dbReference>
<dbReference type="GO" id="GO:0048476">
    <property type="term" value="C:Holliday junction resolvase complex"/>
    <property type="evidence" value="ECO:0007669"/>
    <property type="project" value="UniProtKB-UniRule"/>
</dbReference>
<dbReference type="GO" id="GO:0005524">
    <property type="term" value="F:ATP binding"/>
    <property type="evidence" value="ECO:0007669"/>
    <property type="project" value="UniProtKB-UniRule"/>
</dbReference>
<dbReference type="GO" id="GO:0016887">
    <property type="term" value="F:ATP hydrolysis activity"/>
    <property type="evidence" value="ECO:0007669"/>
    <property type="project" value="InterPro"/>
</dbReference>
<dbReference type="GO" id="GO:0000400">
    <property type="term" value="F:four-way junction DNA binding"/>
    <property type="evidence" value="ECO:0007669"/>
    <property type="project" value="UniProtKB-UniRule"/>
</dbReference>
<dbReference type="GO" id="GO:0009378">
    <property type="term" value="F:four-way junction helicase activity"/>
    <property type="evidence" value="ECO:0007669"/>
    <property type="project" value="InterPro"/>
</dbReference>
<dbReference type="GO" id="GO:0006310">
    <property type="term" value="P:DNA recombination"/>
    <property type="evidence" value="ECO:0007669"/>
    <property type="project" value="UniProtKB-UniRule"/>
</dbReference>
<dbReference type="GO" id="GO:0006281">
    <property type="term" value="P:DNA repair"/>
    <property type="evidence" value="ECO:0007669"/>
    <property type="project" value="UniProtKB-UniRule"/>
</dbReference>
<dbReference type="CDD" id="cd00009">
    <property type="entry name" value="AAA"/>
    <property type="match status" value="1"/>
</dbReference>
<dbReference type="FunFam" id="1.10.10.10:FF:000086">
    <property type="entry name" value="Holliday junction ATP-dependent DNA helicase RuvB"/>
    <property type="match status" value="1"/>
</dbReference>
<dbReference type="FunFam" id="1.10.8.60:FF:000023">
    <property type="entry name" value="Holliday junction ATP-dependent DNA helicase RuvB"/>
    <property type="match status" value="1"/>
</dbReference>
<dbReference type="FunFam" id="3.40.50.300:FF:000073">
    <property type="entry name" value="Holliday junction ATP-dependent DNA helicase RuvB"/>
    <property type="match status" value="1"/>
</dbReference>
<dbReference type="Gene3D" id="1.10.8.60">
    <property type="match status" value="1"/>
</dbReference>
<dbReference type="Gene3D" id="3.40.50.300">
    <property type="entry name" value="P-loop containing nucleotide triphosphate hydrolases"/>
    <property type="match status" value="1"/>
</dbReference>
<dbReference type="Gene3D" id="1.10.10.10">
    <property type="entry name" value="Winged helix-like DNA-binding domain superfamily/Winged helix DNA-binding domain"/>
    <property type="match status" value="1"/>
</dbReference>
<dbReference type="HAMAP" id="MF_00016">
    <property type="entry name" value="DNA_HJ_migration_RuvB"/>
    <property type="match status" value="1"/>
</dbReference>
<dbReference type="InterPro" id="IPR003593">
    <property type="entry name" value="AAA+_ATPase"/>
</dbReference>
<dbReference type="InterPro" id="IPR041445">
    <property type="entry name" value="AAA_lid_4"/>
</dbReference>
<dbReference type="InterPro" id="IPR004605">
    <property type="entry name" value="DNA_helicase_Holl-junc_RuvB"/>
</dbReference>
<dbReference type="InterPro" id="IPR027417">
    <property type="entry name" value="P-loop_NTPase"/>
</dbReference>
<dbReference type="InterPro" id="IPR008824">
    <property type="entry name" value="RuvB-like_N"/>
</dbReference>
<dbReference type="InterPro" id="IPR008823">
    <property type="entry name" value="RuvB_C"/>
</dbReference>
<dbReference type="InterPro" id="IPR036388">
    <property type="entry name" value="WH-like_DNA-bd_sf"/>
</dbReference>
<dbReference type="InterPro" id="IPR036390">
    <property type="entry name" value="WH_DNA-bd_sf"/>
</dbReference>
<dbReference type="NCBIfam" id="NF000868">
    <property type="entry name" value="PRK00080.1"/>
    <property type="match status" value="1"/>
</dbReference>
<dbReference type="NCBIfam" id="TIGR00635">
    <property type="entry name" value="ruvB"/>
    <property type="match status" value="1"/>
</dbReference>
<dbReference type="PANTHER" id="PTHR42848">
    <property type="match status" value="1"/>
</dbReference>
<dbReference type="PANTHER" id="PTHR42848:SF1">
    <property type="entry name" value="HOLLIDAY JUNCTION BRANCH MIGRATION COMPLEX SUBUNIT RUVB"/>
    <property type="match status" value="1"/>
</dbReference>
<dbReference type="Pfam" id="PF17864">
    <property type="entry name" value="AAA_lid_4"/>
    <property type="match status" value="1"/>
</dbReference>
<dbReference type="Pfam" id="PF05491">
    <property type="entry name" value="RuvB_C"/>
    <property type="match status" value="1"/>
</dbReference>
<dbReference type="Pfam" id="PF05496">
    <property type="entry name" value="RuvB_N"/>
    <property type="match status" value="1"/>
</dbReference>
<dbReference type="SMART" id="SM00382">
    <property type="entry name" value="AAA"/>
    <property type="match status" value="1"/>
</dbReference>
<dbReference type="SUPFAM" id="SSF52540">
    <property type="entry name" value="P-loop containing nucleoside triphosphate hydrolases"/>
    <property type="match status" value="1"/>
</dbReference>
<dbReference type="SUPFAM" id="SSF46785">
    <property type="entry name" value="Winged helix' DNA-binding domain"/>
    <property type="match status" value="1"/>
</dbReference>